<protein>
    <recommendedName>
        <fullName>Ribonuclease 3</fullName>
        <ecNumber>3.1.26.3</ecNumber>
    </recommendedName>
    <alternativeName>
        <fullName>Protein drosha</fullName>
    </alternativeName>
    <alternativeName>
        <fullName>Ribonuclease III</fullName>
        <shortName>RNase III</shortName>
    </alternativeName>
</protein>
<dbReference type="EC" id="3.1.26.3"/>
<dbReference type="EMBL" id="HE600906">
    <property type="protein sequence ID" value="CAP24627.1"/>
    <property type="molecule type" value="Genomic_DNA"/>
</dbReference>
<dbReference type="SMR" id="Q61XX9"/>
<dbReference type="FunCoup" id="Q61XX9">
    <property type="interactions" value="2777"/>
</dbReference>
<dbReference type="STRING" id="6238.Q61XX9"/>
<dbReference type="KEGG" id="cbr:CBG_03798"/>
<dbReference type="CTD" id="8581234"/>
<dbReference type="WormBase" id="CBG03798">
    <property type="protein sequence ID" value="CBP41277"/>
    <property type="gene ID" value="WBGene00026581"/>
    <property type="gene designation" value="Cbr-drsh-1"/>
</dbReference>
<dbReference type="eggNOG" id="KOG1817">
    <property type="taxonomic scope" value="Eukaryota"/>
</dbReference>
<dbReference type="HOGENOM" id="CLU_004383_1_0_1"/>
<dbReference type="InParanoid" id="Q61XX9"/>
<dbReference type="OMA" id="SPLNHNE"/>
<dbReference type="Proteomes" id="UP000008549">
    <property type="component" value="Unassembled WGS sequence"/>
</dbReference>
<dbReference type="GO" id="GO:0070877">
    <property type="term" value="C:microprocessor complex"/>
    <property type="evidence" value="ECO:0000318"/>
    <property type="project" value="GO_Central"/>
</dbReference>
<dbReference type="GO" id="GO:0005634">
    <property type="term" value="C:nucleus"/>
    <property type="evidence" value="ECO:0000318"/>
    <property type="project" value="GO_Central"/>
</dbReference>
<dbReference type="GO" id="GO:0046872">
    <property type="term" value="F:metal ion binding"/>
    <property type="evidence" value="ECO:0007669"/>
    <property type="project" value="UniProtKB-KW"/>
</dbReference>
<dbReference type="GO" id="GO:0004525">
    <property type="term" value="F:ribonuclease III activity"/>
    <property type="evidence" value="ECO:0000250"/>
    <property type="project" value="UniProtKB"/>
</dbReference>
<dbReference type="GO" id="GO:0003723">
    <property type="term" value="F:RNA binding"/>
    <property type="evidence" value="ECO:0007669"/>
    <property type="project" value="UniProtKB-KW"/>
</dbReference>
<dbReference type="GO" id="GO:0030154">
    <property type="term" value="P:cell differentiation"/>
    <property type="evidence" value="ECO:0007669"/>
    <property type="project" value="UniProtKB-KW"/>
</dbReference>
<dbReference type="GO" id="GO:0007506">
    <property type="term" value="P:gonadal mesoderm development"/>
    <property type="evidence" value="ECO:0007669"/>
    <property type="project" value="UniProtKB-KW"/>
</dbReference>
<dbReference type="GO" id="GO:0031054">
    <property type="term" value="P:pre-miRNA processing"/>
    <property type="evidence" value="ECO:0000318"/>
    <property type="project" value="GO_Central"/>
</dbReference>
<dbReference type="GO" id="GO:0031053">
    <property type="term" value="P:primary miRNA processing"/>
    <property type="evidence" value="ECO:0000250"/>
    <property type="project" value="UniProtKB"/>
</dbReference>
<dbReference type="GO" id="GO:0006364">
    <property type="term" value="P:rRNA processing"/>
    <property type="evidence" value="ECO:0007669"/>
    <property type="project" value="UniProtKB-KW"/>
</dbReference>
<dbReference type="GO" id="GO:0019953">
    <property type="term" value="P:sexual reproduction"/>
    <property type="evidence" value="ECO:0000250"/>
    <property type="project" value="UniProtKB"/>
</dbReference>
<dbReference type="CDD" id="cd19877">
    <property type="entry name" value="DSRM_RNAse_III_meta_like"/>
    <property type="match status" value="1"/>
</dbReference>
<dbReference type="CDD" id="cd00593">
    <property type="entry name" value="RIBOc"/>
    <property type="match status" value="2"/>
</dbReference>
<dbReference type="FunFam" id="1.10.1520.10:FF:000002">
    <property type="entry name" value="Drosha ribonuclease III"/>
    <property type="match status" value="1"/>
</dbReference>
<dbReference type="FunFam" id="3.30.160.20:FF:000012">
    <property type="entry name" value="Drosha ribonuclease III"/>
    <property type="match status" value="1"/>
</dbReference>
<dbReference type="Gene3D" id="3.30.160.20">
    <property type="match status" value="1"/>
</dbReference>
<dbReference type="Gene3D" id="1.10.1520.10">
    <property type="entry name" value="Ribonuclease III domain"/>
    <property type="match status" value="2"/>
</dbReference>
<dbReference type="HAMAP" id="MF_00104">
    <property type="entry name" value="RNase_III"/>
    <property type="match status" value="1"/>
</dbReference>
<dbReference type="InterPro" id="IPR014720">
    <property type="entry name" value="dsRBD_dom"/>
</dbReference>
<dbReference type="InterPro" id="IPR011907">
    <property type="entry name" value="RNase_III"/>
</dbReference>
<dbReference type="InterPro" id="IPR000999">
    <property type="entry name" value="RNase_III_dom"/>
</dbReference>
<dbReference type="InterPro" id="IPR044442">
    <property type="entry name" value="RNAse_III_DSRM__animal"/>
</dbReference>
<dbReference type="InterPro" id="IPR036389">
    <property type="entry name" value="RNase_III_sf"/>
</dbReference>
<dbReference type="PANTHER" id="PTHR11207:SF0">
    <property type="entry name" value="RIBONUCLEASE 3"/>
    <property type="match status" value="1"/>
</dbReference>
<dbReference type="PANTHER" id="PTHR11207">
    <property type="entry name" value="RIBONUCLEASE III"/>
    <property type="match status" value="1"/>
</dbReference>
<dbReference type="Pfam" id="PF00035">
    <property type="entry name" value="dsrm"/>
    <property type="match status" value="1"/>
</dbReference>
<dbReference type="Pfam" id="PF14622">
    <property type="entry name" value="Ribonucleas_3_3"/>
    <property type="match status" value="1"/>
</dbReference>
<dbReference type="Pfam" id="PF00636">
    <property type="entry name" value="Ribonuclease_3"/>
    <property type="match status" value="1"/>
</dbReference>
<dbReference type="SMART" id="SM00358">
    <property type="entry name" value="DSRM"/>
    <property type="match status" value="1"/>
</dbReference>
<dbReference type="SMART" id="SM00535">
    <property type="entry name" value="RIBOc"/>
    <property type="match status" value="2"/>
</dbReference>
<dbReference type="SUPFAM" id="SSF54768">
    <property type="entry name" value="dsRNA-binding domain-like"/>
    <property type="match status" value="1"/>
</dbReference>
<dbReference type="SUPFAM" id="SSF69065">
    <property type="entry name" value="RNase III domain-like"/>
    <property type="match status" value="2"/>
</dbReference>
<dbReference type="PROSITE" id="PS50137">
    <property type="entry name" value="DS_RBD"/>
    <property type="match status" value="1"/>
</dbReference>
<dbReference type="PROSITE" id="PS00517">
    <property type="entry name" value="RNASE_3_1"/>
    <property type="match status" value="2"/>
</dbReference>
<dbReference type="PROSITE" id="PS50142">
    <property type="entry name" value="RNASE_3_2"/>
    <property type="match status" value="2"/>
</dbReference>
<proteinExistence type="inferred from homology"/>
<sequence>MDFTEIHKRSRRKKFQQIHQDRKDEMIQQLGRRFHNQPSTSATYPSAVEDIPLPSEVPNVFGAPPPLTNADFHRNFLVDPDVVVSHSASLIRSNRHIVKAEDAEQYMMVSRERVGTTAERVLEDFNSRVIKPLKAKRRLQIDVPYIDHPLHSMRSKTPERKENEEDSDSEIRSSDSSSDAEYGSDVEEEPDSCRRKKRTHKIQKADSSQTKVEEKERQNTLLRMGIERKRNHPNAIDPHISYNEKGLGNDSPECRCPFPIRNRGLKHGYYAGENQVLKCSKNDRANLHYYTLHVTPAPNESQIQKTQMLINGMEYHFEGFTMVTHAPLPDCMTRRPVFKYSIDYEFQLIEEFMPTECFDPEDCNSIFEYIFHDIFELLDFDLYPKHLPPGTASCPTIHIVPRFVAMENNTTFIWSSKTVLAFFLLHGKNNMFSPEDVEKNCAMSDDAFGRTIAKLKQSIVLNPMKKPSALRADWFSRDLENKEMFLIQNTIRSQNFASPFLPQIAALEKKMSRLKQEKKDSGNKNPHYENLKAELIVLKDKHREARQLKLKLPVKDYIDTGLKPDVVAHVAMAIIASHHIRYNFSLSVFEKVIEYKFNDRRIVELALIHSSFRSYYGTTPDHVKNMISNCGYRKKYGAEERREKKKGIISLFNIMGGETSGGEPILHNERLEYLGDAVVELIASHHLFFILNHHFEGGLATYRTALVQNRNLAKLAMNCRIDEMLQFAHGADLINEAEWKHALANAFEALMAGVFLDSGIAPCDAIFSKAMYGKDPEMKKVWDHLNEHELKIEDPLGDRDLSRITPALTDFHRLEQIIGIEFNNIRLLAKAFTRRNVPFNDLTKGHNQRLEWLGDSVLQLIISDYLYRNFPLHHEGHMSLLRTSLVSNQTQSVVCDDLGFQEFVIKAPHRKNDLKMKDKADLVEAFIGALYVDKGLEYCRSFIRTVFCPRLKHFINSEKWNDAKSHLQQWCLAIRDSRNPNPAMPEYRLLGIQGPTNNRIFRVAVYFRGERLSSAAASNMHTAELKAAENALAALEKASFSRMREKYMSGRQHRLHRIFFS</sequence>
<accession>Q61XX9</accession>
<accession>A8WWR6</accession>
<reference key="1">
    <citation type="journal article" date="2003" name="PLoS Biol.">
        <title>The genome sequence of Caenorhabditis briggsae: a platform for comparative genomics.</title>
        <authorList>
            <person name="Stein L.D."/>
            <person name="Bao Z."/>
            <person name="Blasiar D."/>
            <person name="Blumenthal T."/>
            <person name="Brent M.R."/>
            <person name="Chen N."/>
            <person name="Chinwalla A."/>
            <person name="Clarke L."/>
            <person name="Clee C."/>
            <person name="Coghlan A."/>
            <person name="Coulson A."/>
            <person name="D'Eustachio P."/>
            <person name="Fitch D.H.A."/>
            <person name="Fulton L.A."/>
            <person name="Fulton R.E."/>
            <person name="Griffiths-Jones S."/>
            <person name="Harris T.W."/>
            <person name="Hillier L.W."/>
            <person name="Kamath R."/>
            <person name="Kuwabara P.E."/>
            <person name="Mardis E.R."/>
            <person name="Marra M.A."/>
            <person name="Miner T.L."/>
            <person name="Minx P."/>
            <person name="Mullikin J.C."/>
            <person name="Plumb R.W."/>
            <person name="Rogers J."/>
            <person name="Schein J.E."/>
            <person name="Sohrmann M."/>
            <person name="Spieth J."/>
            <person name="Stajich J.E."/>
            <person name="Wei C."/>
            <person name="Willey D."/>
            <person name="Wilson R.K."/>
            <person name="Durbin R.M."/>
            <person name="Waterston R.H."/>
        </authorList>
    </citation>
    <scope>NUCLEOTIDE SEQUENCE [LARGE SCALE GENOMIC DNA]</scope>
    <source>
        <strain>AF16</strain>
    </source>
</reference>
<gene>
    <name evidence="2" type="primary">drsh-1</name>
    <name type="ORF">CBG03798</name>
</gene>
<keyword id="KW-0217">Developmental protein</keyword>
<keyword id="KW-0221">Differentiation</keyword>
<keyword id="KW-0255">Endonuclease</keyword>
<keyword id="KW-0334">Gonadal differentiation</keyword>
<keyword id="KW-0378">Hydrolase</keyword>
<keyword id="KW-0460">Magnesium</keyword>
<keyword id="KW-0464">Manganese</keyword>
<keyword id="KW-0479">Metal-binding</keyword>
<keyword id="KW-0540">Nuclease</keyword>
<keyword id="KW-0539">Nucleus</keyword>
<keyword id="KW-1185">Reference proteome</keyword>
<keyword id="KW-0677">Repeat</keyword>
<keyword id="KW-0690">Ribosome biogenesis</keyword>
<keyword id="KW-0694">RNA-binding</keyword>
<keyword id="KW-0698">rRNA processing</keyword>
<feature type="chain" id="PRO_0000309457" description="Ribonuclease 3">
    <location>
        <begin position="1"/>
        <end position="1061"/>
    </location>
</feature>
<feature type="domain" description="RNase III 1" evidence="4">
    <location>
        <begin position="586"/>
        <end position="759"/>
    </location>
</feature>
<feature type="domain" description="RNase III 2" evidence="4">
    <location>
        <begin position="811"/>
        <end position="935"/>
    </location>
</feature>
<feature type="domain" description="DRBM" evidence="4">
    <location>
        <begin position="962"/>
        <end position="1037"/>
    </location>
</feature>
<feature type="region of interest" description="Disordered" evidence="5">
    <location>
        <begin position="1"/>
        <end position="20"/>
    </location>
</feature>
<feature type="region of interest" description="Disordered" evidence="5">
    <location>
        <begin position="149"/>
        <end position="244"/>
    </location>
</feature>
<feature type="compositionally biased region" description="Basic and acidic residues" evidence="5">
    <location>
        <begin position="156"/>
        <end position="173"/>
    </location>
</feature>
<feature type="binding site" evidence="1">
    <location>
        <position position="851"/>
    </location>
    <ligand>
        <name>Mg(2+)</name>
        <dbReference type="ChEBI" id="CHEBI:18420"/>
    </ligand>
</feature>
<feature type="binding site" evidence="1">
    <location>
        <position position="921"/>
    </location>
    <ligand>
        <name>Mg(2+)</name>
        <dbReference type="ChEBI" id="CHEBI:18420"/>
    </ligand>
</feature>
<feature type="binding site" evidence="1">
    <location>
        <position position="924"/>
    </location>
    <ligand>
        <name>Mg(2+)</name>
        <dbReference type="ChEBI" id="CHEBI:18420"/>
    </ligand>
</feature>
<feature type="site" description="Important for activity" evidence="1">
    <location>
        <position position="917"/>
    </location>
</feature>
<evidence type="ECO:0000250" key="1"/>
<evidence type="ECO:0000250" key="2">
    <source>
        <dbReference type="UniProtKB" id="O01326"/>
    </source>
</evidence>
<evidence type="ECO:0000250" key="3">
    <source>
        <dbReference type="UniProtKB" id="Q9NRR4"/>
    </source>
</evidence>
<evidence type="ECO:0000255" key="4"/>
<evidence type="ECO:0000256" key="5">
    <source>
        <dbReference type="SAM" id="MobiDB-lite"/>
    </source>
</evidence>
<evidence type="ECO:0000305" key="6"/>
<name>RNC_CAEBR</name>
<comment type="function">
    <text evidence="1">Executes the initial step of microRNA (miRNA) processing in the nucleus, that is the cleavage of pri-miRNA to release pre-miRNA. Involved in pre-rRNA processing. Cleaves double-strand RNA and does not cleave single-strand RNA. Involved in fertility. Required for the function or synthesis of the let-7 miRNA (By similarity).</text>
</comment>
<comment type="catalytic activity">
    <reaction evidence="4">
        <text>Endonucleolytic cleavage to 5'-phosphomonoester.</text>
        <dbReference type="EC" id="3.1.26.3"/>
    </reaction>
</comment>
<comment type="cofactor">
    <cofactor evidence="1">
        <name>Mg(2+)</name>
        <dbReference type="ChEBI" id="CHEBI:18420"/>
    </cofactor>
    <cofactor evidence="1">
        <name>Mn(2+)</name>
        <dbReference type="ChEBI" id="CHEBI:29035"/>
    </cofactor>
</comment>
<comment type="subcellular location">
    <subcellularLocation>
        <location evidence="3">Nucleus</location>
    </subcellularLocation>
</comment>
<comment type="similarity">
    <text evidence="6">Belongs to the ribonuclease III family.</text>
</comment>
<organism>
    <name type="scientific">Caenorhabditis briggsae</name>
    <dbReference type="NCBI Taxonomy" id="6238"/>
    <lineage>
        <taxon>Eukaryota</taxon>
        <taxon>Metazoa</taxon>
        <taxon>Ecdysozoa</taxon>
        <taxon>Nematoda</taxon>
        <taxon>Chromadorea</taxon>
        <taxon>Rhabditida</taxon>
        <taxon>Rhabditina</taxon>
        <taxon>Rhabditomorpha</taxon>
        <taxon>Rhabditoidea</taxon>
        <taxon>Rhabditidae</taxon>
        <taxon>Peloderinae</taxon>
        <taxon>Caenorhabditis</taxon>
    </lineage>
</organism>